<gene>
    <name type="primary">Cdh17</name>
</gene>
<protein>
    <recommendedName>
        <fullName>Cadherin-17</fullName>
    </recommendedName>
    <alternativeName>
        <fullName>Liver-intestine cadherin</fullName>
        <shortName>LI-cadherin</shortName>
    </alternativeName>
</protein>
<dbReference type="EMBL" id="X78997">
    <property type="protein sequence ID" value="CAA55631.1"/>
    <property type="molecule type" value="mRNA"/>
</dbReference>
<dbReference type="PIR" id="A53954">
    <property type="entry name" value="A53954"/>
</dbReference>
<dbReference type="RefSeq" id="NP_446429.1">
    <property type="nucleotide sequence ID" value="NM_053977.2"/>
</dbReference>
<dbReference type="RefSeq" id="XP_008761743.1">
    <property type="nucleotide sequence ID" value="XM_008763521.1"/>
</dbReference>
<dbReference type="RefSeq" id="XP_017448620.1">
    <property type="nucleotide sequence ID" value="XM_017593131.1"/>
</dbReference>
<dbReference type="RefSeq" id="XP_063143150.1">
    <property type="nucleotide sequence ID" value="XM_063287080.1"/>
</dbReference>
<dbReference type="RefSeq" id="XP_063143151.1">
    <property type="nucleotide sequence ID" value="XM_063287081.1"/>
</dbReference>
<dbReference type="RefSeq" id="XP_063143152.1">
    <property type="nucleotide sequence ID" value="XM_063287082.1"/>
</dbReference>
<dbReference type="SMR" id="P55281"/>
<dbReference type="FunCoup" id="P55281">
    <property type="interactions" value="35"/>
</dbReference>
<dbReference type="STRING" id="10116.ENSRNOP00000021612"/>
<dbReference type="GlyCosmos" id="P55281">
    <property type="glycosylation" value="7 sites, No reported glycans"/>
</dbReference>
<dbReference type="GlyGen" id="P55281">
    <property type="glycosylation" value="7 sites"/>
</dbReference>
<dbReference type="PhosphoSitePlus" id="P55281"/>
<dbReference type="PaxDb" id="10116-ENSRNOP00000021612"/>
<dbReference type="Ensembl" id="ENSRNOT00000021612.5">
    <property type="protein sequence ID" value="ENSRNOP00000021612.2"/>
    <property type="gene ID" value="ENSRNOG00000015562.5"/>
</dbReference>
<dbReference type="GeneID" id="117048"/>
<dbReference type="KEGG" id="rno:117048"/>
<dbReference type="UCSC" id="RGD:619748">
    <property type="organism name" value="rat"/>
</dbReference>
<dbReference type="AGR" id="RGD:619748"/>
<dbReference type="CTD" id="1015"/>
<dbReference type="RGD" id="619748">
    <property type="gene designation" value="Cdh17"/>
</dbReference>
<dbReference type="eggNOG" id="KOG3594">
    <property type="taxonomic scope" value="Eukaryota"/>
</dbReference>
<dbReference type="GeneTree" id="ENSGT00940000157655"/>
<dbReference type="HOGENOM" id="CLU_016170_0_0_1"/>
<dbReference type="InParanoid" id="P55281"/>
<dbReference type="OMA" id="DVNNEMP"/>
<dbReference type="PhylomeDB" id="P55281"/>
<dbReference type="TreeFam" id="TF316817"/>
<dbReference type="Reactome" id="R-RNO-418990">
    <property type="pathway name" value="Adherens junctions interactions"/>
</dbReference>
<dbReference type="PRO" id="PR:P55281"/>
<dbReference type="Proteomes" id="UP000002494">
    <property type="component" value="Chromosome 5"/>
</dbReference>
<dbReference type="Bgee" id="ENSRNOG00000015562">
    <property type="expression patterns" value="Expressed in jejunum and 17 other cell types or tissues"/>
</dbReference>
<dbReference type="GO" id="GO:0005912">
    <property type="term" value="C:adherens junction"/>
    <property type="evidence" value="ECO:0000318"/>
    <property type="project" value="GO_Central"/>
</dbReference>
<dbReference type="GO" id="GO:0016323">
    <property type="term" value="C:basolateral plasma membrane"/>
    <property type="evidence" value="ECO:0000314"/>
    <property type="project" value="RGD"/>
</dbReference>
<dbReference type="GO" id="GO:0016342">
    <property type="term" value="C:catenin complex"/>
    <property type="evidence" value="ECO:0000318"/>
    <property type="project" value="GO_Central"/>
</dbReference>
<dbReference type="GO" id="GO:0009986">
    <property type="term" value="C:cell surface"/>
    <property type="evidence" value="ECO:0000266"/>
    <property type="project" value="RGD"/>
</dbReference>
<dbReference type="GO" id="GO:0005886">
    <property type="term" value="C:plasma membrane"/>
    <property type="evidence" value="ECO:0000266"/>
    <property type="project" value="RGD"/>
</dbReference>
<dbReference type="GO" id="GO:0008013">
    <property type="term" value="F:beta-catenin binding"/>
    <property type="evidence" value="ECO:0000318"/>
    <property type="project" value="GO_Central"/>
</dbReference>
<dbReference type="GO" id="GO:0045296">
    <property type="term" value="F:cadherin binding"/>
    <property type="evidence" value="ECO:0000318"/>
    <property type="project" value="GO_Central"/>
</dbReference>
<dbReference type="GO" id="GO:0005509">
    <property type="term" value="F:calcium ion binding"/>
    <property type="evidence" value="ECO:0007669"/>
    <property type="project" value="InterPro"/>
</dbReference>
<dbReference type="GO" id="GO:0005178">
    <property type="term" value="F:integrin binding"/>
    <property type="evidence" value="ECO:0000266"/>
    <property type="project" value="RGD"/>
</dbReference>
<dbReference type="GO" id="GO:0005427">
    <property type="term" value="F:proton-dependent oligopeptide secondary active transmembrane transporter activity"/>
    <property type="evidence" value="ECO:0000250"/>
    <property type="project" value="UniProtKB"/>
</dbReference>
<dbReference type="GO" id="GO:0034332">
    <property type="term" value="P:adherens junction organization"/>
    <property type="evidence" value="ECO:0000318"/>
    <property type="project" value="GO_Central"/>
</dbReference>
<dbReference type="GO" id="GO:0030183">
    <property type="term" value="P:B cell differentiation"/>
    <property type="evidence" value="ECO:0000266"/>
    <property type="project" value="RGD"/>
</dbReference>
<dbReference type="GO" id="GO:0016339">
    <property type="term" value="P:calcium-dependent cell-cell adhesion via plasma membrane cell adhesion molecules"/>
    <property type="evidence" value="ECO:0000250"/>
    <property type="project" value="UniProtKB"/>
</dbReference>
<dbReference type="GO" id="GO:0016477">
    <property type="term" value="P:cell migration"/>
    <property type="evidence" value="ECO:0000318"/>
    <property type="project" value="GO_Central"/>
</dbReference>
<dbReference type="GO" id="GO:0000902">
    <property type="term" value="P:cell morphogenesis"/>
    <property type="evidence" value="ECO:0000318"/>
    <property type="project" value="GO_Central"/>
</dbReference>
<dbReference type="GO" id="GO:0044331">
    <property type="term" value="P:cell-cell adhesion mediated by cadherin"/>
    <property type="evidence" value="ECO:0000318"/>
    <property type="project" value="GO_Central"/>
</dbReference>
<dbReference type="GO" id="GO:0007043">
    <property type="term" value="P:cell-cell junction assembly"/>
    <property type="evidence" value="ECO:0000318"/>
    <property type="project" value="GO_Central"/>
</dbReference>
<dbReference type="GO" id="GO:0002314">
    <property type="term" value="P:germinal center B cell differentiation"/>
    <property type="evidence" value="ECO:0000266"/>
    <property type="project" value="RGD"/>
</dbReference>
<dbReference type="GO" id="GO:0007156">
    <property type="term" value="P:homophilic cell adhesion via plasma membrane adhesion molecules"/>
    <property type="evidence" value="ECO:0000250"/>
    <property type="project" value="UniProtKB"/>
</dbReference>
<dbReference type="GO" id="GO:0007229">
    <property type="term" value="P:integrin-mediated signaling pathway"/>
    <property type="evidence" value="ECO:0000266"/>
    <property type="project" value="RGD"/>
</dbReference>
<dbReference type="GO" id="GO:0002315">
    <property type="term" value="P:marginal zone B cell differentiation"/>
    <property type="evidence" value="ECO:0000266"/>
    <property type="project" value="RGD"/>
</dbReference>
<dbReference type="GO" id="GO:0035672">
    <property type="term" value="P:oligopeptide transmembrane transport"/>
    <property type="evidence" value="ECO:0000250"/>
    <property type="project" value="UniProtKB"/>
</dbReference>
<dbReference type="GO" id="GO:0006857">
    <property type="term" value="P:oligopeptide transport"/>
    <property type="evidence" value="ECO:0000266"/>
    <property type="project" value="RGD"/>
</dbReference>
<dbReference type="GO" id="GO:0033626">
    <property type="term" value="P:positive regulation of integrin activation by cell surface receptor linked signal transduction"/>
    <property type="evidence" value="ECO:0000266"/>
    <property type="project" value="RGD"/>
</dbReference>
<dbReference type="GO" id="GO:0048536">
    <property type="term" value="P:spleen development"/>
    <property type="evidence" value="ECO:0000266"/>
    <property type="project" value="RGD"/>
</dbReference>
<dbReference type="CDD" id="cd11304">
    <property type="entry name" value="Cadherin_repeat"/>
    <property type="match status" value="6"/>
</dbReference>
<dbReference type="FunFam" id="2.60.40.60:FF:000151">
    <property type="entry name" value="Cadherin 17"/>
    <property type="match status" value="1"/>
</dbReference>
<dbReference type="FunFam" id="2.60.40.60:FF:000152">
    <property type="entry name" value="Cadherin 17"/>
    <property type="match status" value="1"/>
</dbReference>
<dbReference type="FunFam" id="2.60.40.60:FF:000163">
    <property type="entry name" value="Cadherin 17"/>
    <property type="match status" value="1"/>
</dbReference>
<dbReference type="FunFam" id="2.60.40.60:FF:000169">
    <property type="entry name" value="Cadherin 17"/>
    <property type="match status" value="1"/>
</dbReference>
<dbReference type="FunFam" id="2.60.40.60:FF:000183">
    <property type="entry name" value="Cadherin 17"/>
    <property type="match status" value="1"/>
</dbReference>
<dbReference type="FunFam" id="2.60.40.60:FF:000188">
    <property type="entry name" value="Cadherin 17"/>
    <property type="match status" value="1"/>
</dbReference>
<dbReference type="FunFam" id="2.60.40.60:FF:000212">
    <property type="entry name" value="Cadherin 17"/>
    <property type="match status" value="1"/>
</dbReference>
<dbReference type="Gene3D" id="2.60.40.60">
    <property type="entry name" value="Cadherins"/>
    <property type="match status" value="7"/>
</dbReference>
<dbReference type="InterPro" id="IPR039808">
    <property type="entry name" value="Cadherin"/>
</dbReference>
<dbReference type="InterPro" id="IPR002126">
    <property type="entry name" value="Cadherin-like_dom"/>
</dbReference>
<dbReference type="InterPro" id="IPR015919">
    <property type="entry name" value="Cadherin-like_sf"/>
</dbReference>
<dbReference type="InterPro" id="IPR020894">
    <property type="entry name" value="Cadherin_CS"/>
</dbReference>
<dbReference type="PANTHER" id="PTHR24027:SF419">
    <property type="entry name" value="CADHERIN-17"/>
    <property type="match status" value="1"/>
</dbReference>
<dbReference type="PANTHER" id="PTHR24027">
    <property type="entry name" value="CADHERIN-23"/>
    <property type="match status" value="1"/>
</dbReference>
<dbReference type="Pfam" id="PF00028">
    <property type="entry name" value="Cadherin"/>
    <property type="match status" value="5"/>
</dbReference>
<dbReference type="PRINTS" id="PR00205">
    <property type="entry name" value="CADHERIN"/>
</dbReference>
<dbReference type="SMART" id="SM00112">
    <property type="entry name" value="CA"/>
    <property type="match status" value="6"/>
</dbReference>
<dbReference type="SUPFAM" id="SSF49313">
    <property type="entry name" value="Cadherin-like"/>
    <property type="match status" value="7"/>
</dbReference>
<dbReference type="PROSITE" id="PS00232">
    <property type="entry name" value="CADHERIN_1"/>
    <property type="match status" value="3"/>
</dbReference>
<dbReference type="PROSITE" id="PS50268">
    <property type="entry name" value="CADHERIN_2"/>
    <property type="match status" value="6"/>
</dbReference>
<evidence type="ECO:0000250" key="1"/>
<evidence type="ECO:0000255" key="2"/>
<evidence type="ECO:0000255" key="3">
    <source>
        <dbReference type="PROSITE-ProRule" id="PRU00043"/>
    </source>
</evidence>
<name>CAD17_RAT</name>
<comment type="function">
    <text>Cadherins are calcium-dependent cell adhesion proteins. They preferentially interact with themselves in a homophilic manner in connecting cells; cadherins may thus contribute to the sorting of heterogeneous cell types. LI-cadherin may have a role in the morphological organization of liver and intestine.</text>
</comment>
<comment type="subcellular location">
    <subcellularLocation>
        <location>Cell membrane</location>
        <topology>Single-pass type I membrane protein</topology>
    </subcellularLocation>
</comment>
<comment type="tissue specificity">
    <text>Liver and intestine.</text>
</comment>
<comment type="domain">
    <text evidence="1">Three calcium ions are usually bound at the interface of each cadherin domain and rigidify the connections, imparting a strong curvature to the full-length ectodomain.</text>
</comment>
<organism>
    <name type="scientific">Rattus norvegicus</name>
    <name type="common">Rat</name>
    <dbReference type="NCBI Taxonomy" id="10116"/>
    <lineage>
        <taxon>Eukaryota</taxon>
        <taxon>Metazoa</taxon>
        <taxon>Chordata</taxon>
        <taxon>Craniata</taxon>
        <taxon>Vertebrata</taxon>
        <taxon>Euteleostomi</taxon>
        <taxon>Mammalia</taxon>
        <taxon>Eutheria</taxon>
        <taxon>Euarchontoglires</taxon>
        <taxon>Glires</taxon>
        <taxon>Rodentia</taxon>
        <taxon>Myomorpha</taxon>
        <taxon>Muroidea</taxon>
        <taxon>Muridae</taxon>
        <taxon>Murinae</taxon>
        <taxon>Rattus</taxon>
    </lineage>
</organism>
<proteinExistence type="evidence at transcript level"/>
<sequence length="827" mass="91863">MVSAQLHFLCLLTLYLTGAYGQEGKFSGPLKPMTFSIFEGQEPSQIIFQFKANPPAVTFELTGETDGIFKIEKDGLLYHTRVLDRETRAVHHLQLAALDSQGAIVDGPVPIIIEVKDINDNRPTFLQTKYEGSVRQNSRPGKPFMYVNATDLDDPATPNGQLFYQIVIQLPKINNVMYFQIDNKTGAISLTPEGSQVLDPIKNPYYNLVVSVKDMGGQNENSFSDTTSVDITVRENIWKAPEPVEIRENLTDPHPIKITQVQWNDPGAHYSLINKEKLPQFPFSIDQEGNIYVTQPLDREEKDSHVFFATAKDENGKPLAYPLEIRVKVIDINDNPPTCLSQVTVFEVQENEVLGSSIGIFAAHDMDEANNINSILKYRLVDQTPKVPSDELFLIDEYGGKVQLGKRSLKKQDSPQYNLTVEVSDIDFKTLCSLQVNVIDINDQIPIFERSDYGSKTLSEDTAIGSTILIIQATDDDEPFTGSSKILYKIVQGDTEGRLEVVTDPMTNTGYVKIRKPLDFETEPVTSIVFKAENPEPLVNGIEYNASSFASFELTVTDVNEVPVFPQQIFQANVSEDTAIGTKVGTVTARDPEGLTVSYSLKDNKRGWLKIDSVTGDIFSTAPLDRETESVYRVQVVATEVGGSSLSSTAYFHLVLMDVNDNPPRLAKDYTGLFFCHPLSAPGSLIFEATDDDQQSVRRPKFTFALGRESLQSDWEVSKINGTHARLSTKHTRFEEQVYDIPILINDGGQPPMEGIVSLSVTFCQCVDGSCFRPAGNQVGIPTVGMAVGILLTTFLVIGIILAVVFIRMRKDKVEDPQSPENKPLRS</sequence>
<accession>P55281</accession>
<reference key="1">
    <citation type="journal article" date="1994" name="J. Cell Biol.">
        <title>Liver-intestine cadherin: molecular cloning and characterization of a novel Ca(2+)-dependent cell adhesion molecule expressed in liver and intestine.</title>
        <authorList>
            <person name="Berndorff D."/>
            <person name="Gessner R."/>
            <person name="Kreft B."/>
            <person name="Schnoy N."/>
            <person name="Lajous-Petter A.-M."/>
            <person name="Loch N."/>
            <person name="Reutter W."/>
            <person name="Hortsch M."/>
            <person name="Tauber R."/>
        </authorList>
    </citation>
    <scope>NUCLEOTIDE SEQUENCE [MRNA]</scope>
    <source>
        <strain>Sprague-Dawley</strain>
        <tissue>Liver</tissue>
    </source>
</reference>
<feature type="signal peptide" evidence="2">
    <location>
        <begin position="1"/>
        <end position="21"/>
    </location>
</feature>
<feature type="chain" id="PRO_0000003814" description="Cadherin-17">
    <location>
        <begin position="22"/>
        <end position="827"/>
    </location>
</feature>
<feature type="topological domain" description="Extracellular" evidence="2">
    <location>
        <begin position="22"/>
        <end position="786"/>
    </location>
</feature>
<feature type="transmembrane region" description="Helical" evidence="2">
    <location>
        <begin position="787"/>
        <end position="807"/>
    </location>
</feature>
<feature type="topological domain" description="Cytoplasmic" evidence="2">
    <location>
        <begin position="808"/>
        <end position="827"/>
    </location>
</feature>
<feature type="domain" description="Cadherin 1" evidence="3">
    <location>
        <begin position="29"/>
        <end position="127"/>
    </location>
</feature>
<feature type="domain" description="Cadherin 2" evidence="3">
    <location>
        <begin position="128"/>
        <end position="243"/>
    </location>
</feature>
<feature type="domain" description="Cadherin 3" evidence="3">
    <location>
        <begin position="244"/>
        <end position="339"/>
    </location>
</feature>
<feature type="domain" description="Cadherin 4" evidence="3">
    <location>
        <begin position="340"/>
        <end position="448"/>
    </location>
</feature>
<feature type="domain" description="Cadherin 5" evidence="3">
    <location>
        <begin position="449"/>
        <end position="565"/>
    </location>
</feature>
<feature type="domain" description="Cadherin 6" evidence="3">
    <location>
        <begin position="566"/>
        <end position="666"/>
    </location>
</feature>
<feature type="domain" description="Cadherin 7" evidence="3">
    <location>
        <begin position="667"/>
        <end position="776"/>
    </location>
</feature>
<feature type="glycosylation site" description="N-linked (GlcNAc...) asparagine" evidence="2">
    <location>
        <position position="148"/>
    </location>
</feature>
<feature type="glycosylation site" description="N-linked (GlcNAc...) asparagine" evidence="2">
    <location>
        <position position="183"/>
    </location>
</feature>
<feature type="glycosylation site" description="N-linked (GlcNAc...) asparagine" evidence="2">
    <location>
        <position position="249"/>
    </location>
</feature>
<feature type="glycosylation site" description="N-linked (GlcNAc...) asparagine" evidence="2">
    <location>
        <position position="418"/>
    </location>
</feature>
<feature type="glycosylation site" description="N-linked (GlcNAc...) asparagine" evidence="2">
    <location>
        <position position="545"/>
    </location>
</feature>
<feature type="glycosylation site" description="N-linked (GlcNAc...) asparagine" evidence="2">
    <location>
        <position position="573"/>
    </location>
</feature>
<feature type="glycosylation site" description="N-linked (GlcNAc...) asparagine" evidence="2">
    <location>
        <position position="721"/>
    </location>
</feature>
<keyword id="KW-0106">Calcium</keyword>
<keyword id="KW-0130">Cell adhesion</keyword>
<keyword id="KW-1003">Cell membrane</keyword>
<keyword id="KW-0325">Glycoprotein</keyword>
<keyword id="KW-0472">Membrane</keyword>
<keyword id="KW-0479">Metal-binding</keyword>
<keyword id="KW-1185">Reference proteome</keyword>
<keyword id="KW-0677">Repeat</keyword>
<keyword id="KW-0732">Signal</keyword>
<keyword id="KW-0812">Transmembrane</keyword>
<keyword id="KW-1133">Transmembrane helix</keyword>